<keyword id="KW-0997">Cell inner membrane</keyword>
<keyword id="KW-1003">Cell membrane</keyword>
<keyword id="KW-0472">Membrane</keyword>
<dbReference type="EMBL" id="AM039952">
    <property type="protein sequence ID" value="CAJ24235.1"/>
    <property type="molecule type" value="Genomic_DNA"/>
</dbReference>
<dbReference type="STRING" id="456327.BJD11_10115"/>
<dbReference type="KEGG" id="xcv:XCV2558"/>
<dbReference type="eggNOG" id="COG0759">
    <property type="taxonomic scope" value="Bacteria"/>
</dbReference>
<dbReference type="HOGENOM" id="CLU_144811_2_2_6"/>
<dbReference type="Proteomes" id="UP000007069">
    <property type="component" value="Chromosome"/>
</dbReference>
<dbReference type="GO" id="GO:0005886">
    <property type="term" value="C:plasma membrane"/>
    <property type="evidence" value="ECO:0007669"/>
    <property type="project" value="UniProtKB-SubCell"/>
</dbReference>
<dbReference type="HAMAP" id="MF_00386">
    <property type="entry name" value="UPF0161_YidD"/>
    <property type="match status" value="1"/>
</dbReference>
<dbReference type="InterPro" id="IPR002696">
    <property type="entry name" value="Membr_insert_effic_factor_YidD"/>
</dbReference>
<dbReference type="NCBIfam" id="TIGR00278">
    <property type="entry name" value="membrane protein insertion efficiency factor YidD"/>
    <property type="match status" value="1"/>
</dbReference>
<dbReference type="PANTHER" id="PTHR33383">
    <property type="entry name" value="MEMBRANE PROTEIN INSERTION EFFICIENCY FACTOR-RELATED"/>
    <property type="match status" value="1"/>
</dbReference>
<dbReference type="PANTHER" id="PTHR33383:SF1">
    <property type="entry name" value="MEMBRANE PROTEIN INSERTION EFFICIENCY FACTOR-RELATED"/>
    <property type="match status" value="1"/>
</dbReference>
<dbReference type="Pfam" id="PF01809">
    <property type="entry name" value="YidD"/>
    <property type="match status" value="1"/>
</dbReference>
<dbReference type="SMART" id="SM01234">
    <property type="entry name" value="Haemolytic"/>
    <property type="match status" value="1"/>
</dbReference>
<sequence length="97" mass="10556">MQVAYHWQVISRLLIALLRVYKLVISPLLGPRCRFAPSCSDYAMTAIGRFGPLRGSWLAARRLGRCHPFHPGGFDPVPDAPASPSPSSSCSCKGPHP</sequence>
<gene>
    <name type="ordered locus">XCV2558</name>
</gene>
<organism>
    <name type="scientific">Xanthomonas euvesicatoria pv. vesicatoria (strain 85-10)</name>
    <name type="common">Xanthomonas campestris pv. vesicatoria</name>
    <dbReference type="NCBI Taxonomy" id="316273"/>
    <lineage>
        <taxon>Bacteria</taxon>
        <taxon>Pseudomonadati</taxon>
        <taxon>Pseudomonadota</taxon>
        <taxon>Gammaproteobacteria</taxon>
        <taxon>Lysobacterales</taxon>
        <taxon>Lysobacteraceae</taxon>
        <taxon>Xanthomonas</taxon>
    </lineage>
</organism>
<feature type="chain" id="PRO_0000253198" description="Putative membrane protein insertion efficiency factor">
    <location>
        <begin position="1"/>
        <end position="97"/>
    </location>
</feature>
<feature type="region of interest" description="Disordered" evidence="2">
    <location>
        <begin position="77"/>
        <end position="97"/>
    </location>
</feature>
<feature type="compositionally biased region" description="Low complexity" evidence="2">
    <location>
        <begin position="85"/>
        <end position="97"/>
    </location>
</feature>
<proteinExistence type="inferred from homology"/>
<name>YIDD_XANE5</name>
<comment type="function">
    <text evidence="1">Could be involved in insertion of integral membrane proteins into the membrane.</text>
</comment>
<comment type="subcellular location">
    <subcellularLocation>
        <location evidence="1">Cell inner membrane</location>
        <topology evidence="1">Peripheral membrane protein</topology>
        <orientation evidence="1">Cytoplasmic side</orientation>
    </subcellularLocation>
</comment>
<comment type="similarity">
    <text evidence="1">Belongs to the UPF0161 family.</text>
</comment>
<accession>Q3BSH4</accession>
<protein>
    <recommendedName>
        <fullName evidence="1">Putative membrane protein insertion efficiency factor</fullName>
    </recommendedName>
</protein>
<evidence type="ECO:0000255" key="1">
    <source>
        <dbReference type="HAMAP-Rule" id="MF_00386"/>
    </source>
</evidence>
<evidence type="ECO:0000256" key="2">
    <source>
        <dbReference type="SAM" id="MobiDB-lite"/>
    </source>
</evidence>
<reference key="1">
    <citation type="journal article" date="2005" name="J. Bacteriol.">
        <title>Insights into genome plasticity and pathogenicity of the plant pathogenic Bacterium Xanthomonas campestris pv. vesicatoria revealed by the complete genome sequence.</title>
        <authorList>
            <person name="Thieme F."/>
            <person name="Koebnik R."/>
            <person name="Bekel T."/>
            <person name="Berger C."/>
            <person name="Boch J."/>
            <person name="Buettner D."/>
            <person name="Caldana C."/>
            <person name="Gaigalat L."/>
            <person name="Goesmann A."/>
            <person name="Kay S."/>
            <person name="Kirchner O."/>
            <person name="Lanz C."/>
            <person name="Linke B."/>
            <person name="McHardy A.C."/>
            <person name="Meyer F."/>
            <person name="Mittenhuber G."/>
            <person name="Nies D.H."/>
            <person name="Niesbach-Kloesgen U."/>
            <person name="Patschkowski T."/>
            <person name="Rueckert C."/>
            <person name="Rupp O."/>
            <person name="Schneiker S."/>
            <person name="Schuster S.C."/>
            <person name="Vorhoelter F.J."/>
            <person name="Weber E."/>
            <person name="Puehler A."/>
            <person name="Bonas U."/>
            <person name="Bartels D."/>
            <person name="Kaiser O."/>
        </authorList>
    </citation>
    <scope>NUCLEOTIDE SEQUENCE [LARGE SCALE GENOMIC DNA]</scope>
    <source>
        <strain>85-10</strain>
    </source>
</reference>